<protein>
    <recommendedName>
        <fullName evidence="1">o-succinylbenzoate synthase</fullName>
        <shortName evidence="1">OSB synthase</shortName>
        <shortName evidence="1">OSBS</shortName>
        <ecNumber evidence="1">4.2.1.113</ecNumber>
    </recommendedName>
    <alternativeName>
        <fullName evidence="1">4-(2'-carboxyphenyl)-4-oxybutyric acid synthase</fullName>
    </alternativeName>
    <alternativeName>
        <fullName evidence="1">o-succinylbenzoic acid synthase</fullName>
    </alternativeName>
</protein>
<proteinExistence type="inferred from homology"/>
<keyword id="KW-0456">Lyase</keyword>
<keyword id="KW-0460">Magnesium</keyword>
<keyword id="KW-0474">Menaquinone biosynthesis</keyword>
<keyword id="KW-0479">Metal-binding</keyword>
<keyword id="KW-1185">Reference proteome</keyword>
<reference key="1">
    <citation type="journal article" date="2007" name="J. Bacteriol.">
        <title>The genome sequence of avian pathogenic Escherichia coli strain O1:K1:H7 shares strong similarities with human extraintestinal pathogenic E. coli genomes.</title>
        <authorList>
            <person name="Johnson T.J."/>
            <person name="Kariyawasam S."/>
            <person name="Wannemuehler Y."/>
            <person name="Mangiamele P."/>
            <person name="Johnson S.J."/>
            <person name="Doetkott C."/>
            <person name="Skyberg J.A."/>
            <person name="Lynne A.M."/>
            <person name="Johnson J.R."/>
            <person name="Nolan L.K."/>
        </authorList>
    </citation>
    <scope>NUCLEOTIDE SEQUENCE [LARGE SCALE GENOMIC DNA]</scope>
</reference>
<accession>A1ADB3</accession>
<name>MENC_ECOK1</name>
<comment type="function">
    <text evidence="1">Converts 2-succinyl-6-hydroxy-2,4-cyclohexadiene-1-carboxylate (SHCHC) to 2-succinylbenzoate (OSB).</text>
</comment>
<comment type="catalytic activity">
    <reaction evidence="1">
        <text>(1R,6R)-6-hydroxy-2-succinyl-cyclohexa-2,4-diene-1-carboxylate = 2-succinylbenzoate + H2O</text>
        <dbReference type="Rhea" id="RHEA:10196"/>
        <dbReference type="ChEBI" id="CHEBI:15377"/>
        <dbReference type="ChEBI" id="CHEBI:18325"/>
        <dbReference type="ChEBI" id="CHEBI:58689"/>
        <dbReference type="EC" id="4.2.1.113"/>
    </reaction>
</comment>
<comment type="cofactor">
    <cofactor evidence="1">
        <name>a divalent metal cation</name>
        <dbReference type="ChEBI" id="CHEBI:60240"/>
    </cofactor>
</comment>
<comment type="pathway">
    <text evidence="1">Quinol/quinone metabolism; 1,4-dihydroxy-2-naphthoate biosynthesis; 1,4-dihydroxy-2-naphthoate from chorismate: step 4/7.</text>
</comment>
<comment type="pathway">
    <text evidence="1">Quinol/quinone metabolism; menaquinone biosynthesis.</text>
</comment>
<comment type="similarity">
    <text evidence="1">Belongs to the mandelate racemase/muconate lactonizing enzyme family. MenC type 1 subfamily.</text>
</comment>
<organism>
    <name type="scientific">Escherichia coli O1:K1 / APEC</name>
    <dbReference type="NCBI Taxonomy" id="405955"/>
    <lineage>
        <taxon>Bacteria</taxon>
        <taxon>Pseudomonadati</taxon>
        <taxon>Pseudomonadota</taxon>
        <taxon>Gammaproteobacteria</taxon>
        <taxon>Enterobacterales</taxon>
        <taxon>Enterobacteriaceae</taxon>
        <taxon>Escherichia</taxon>
    </lineage>
</organism>
<dbReference type="EC" id="4.2.1.113" evidence="1"/>
<dbReference type="EMBL" id="CP000468">
    <property type="protein sequence ID" value="ABJ01653.1"/>
    <property type="molecule type" value="Genomic_DNA"/>
</dbReference>
<dbReference type="RefSeq" id="WP_001255587.1">
    <property type="nucleotide sequence ID" value="NZ_CADILS010000004.1"/>
</dbReference>
<dbReference type="SMR" id="A1ADB3"/>
<dbReference type="KEGG" id="ecv:APECO1_4300"/>
<dbReference type="HOGENOM" id="CLU_030273_0_1_6"/>
<dbReference type="UniPathway" id="UPA00079"/>
<dbReference type="UniPathway" id="UPA01057">
    <property type="reaction ID" value="UER00165"/>
</dbReference>
<dbReference type="Proteomes" id="UP000008216">
    <property type="component" value="Chromosome"/>
</dbReference>
<dbReference type="GO" id="GO:0000287">
    <property type="term" value="F:magnesium ion binding"/>
    <property type="evidence" value="ECO:0007669"/>
    <property type="project" value="UniProtKB-UniRule"/>
</dbReference>
<dbReference type="GO" id="GO:0043748">
    <property type="term" value="F:O-succinylbenzoate synthase activity"/>
    <property type="evidence" value="ECO:0007669"/>
    <property type="project" value="UniProtKB-EC"/>
</dbReference>
<dbReference type="GO" id="GO:0009234">
    <property type="term" value="P:menaquinone biosynthetic process"/>
    <property type="evidence" value="ECO:0007669"/>
    <property type="project" value="UniProtKB-UniRule"/>
</dbReference>
<dbReference type="CDD" id="cd03320">
    <property type="entry name" value="OSBS"/>
    <property type="match status" value="1"/>
</dbReference>
<dbReference type="FunFam" id="3.20.20.120:FF:000006">
    <property type="entry name" value="o-succinylbenzoate synthase"/>
    <property type="match status" value="1"/>
</dbReference>
<dbReference type="FunFam" id="3.30.390.10:FF:000005">
    <property type="entry name" value="o-succinylbenzoate synthase"/>
    <property type="match status" value="1"/>
</dbReference>
<dbReference type="Gene3D" id="3.20.20.120">
    <property type="entry name" value="Enolase-like C-terminal domain"/>
    <property type="match status" value="1"/>
</dbReference>
<dbReference type="Gene3D" id="3.30.390.10">
    <property type="entry name" value="Enolase-like, N-terminal domain"/>
    <property type="match status" value="1"/>
</dbReference>
<dbReference type="HAMAP" id="MF_00470">
    <property type="entry name" value="MenC_1"/>
    <property type="match status" value="1"/>
</dbReference>
<dbReference type="InterPro" id="IPR036849">
    <property type="entry name" value="Enolase-like_C_sf"/>
</dbReference>
<dbReference type="InterPro" id="IPR029017">
    <property type="entry name" value="Enolase-like_N"/>
</dbReference>
<dbReference type="InterPro" id="IPR029065">
    <property type="entry name" value="Enolase_C-like"/>
</dbReference>
<dbReference type="InterPro" id="IPR013342">
    <property type="entry name" value="Mandelate_racemase_C"/>
</dbReference>
<dbReference type="InterPro" id="IPR010196">
    <property type="entry name" value="OSB_synthase_MenC1"/>
</dbReference>
<dbReference type="InterPro" id="IPR041338">
    <property type="entry name" value="OSBS_N"/>
</dbReference>
<dbReference type="NCBIfam" id="TIGR01927">
    <property type="entry name" value="menC_gam_Gplu"/>
    <property type="match status" value="1"/>
</dbReference>
<dbReference type="NCBIfam" id="NF003473">
    <property type="entry name" value="PRK05105.1"/>
    <property type="match status" value="1"/>
</dbReference>
<dbReference type="PANTHER" id="PTHR48073:SF2">
    <property type="entry name" value="O-SUCCINYLBENZOATE SYNTHASE"/>
    <property type="match status" value="1"/>
</dbReference>
<dbReference type="PANTHER" id="PTHR48073">
    <property type="entry name" value="O-SUCCINYLBENZOATE SYNTHASE-RELATED"/>
    <property type="match status" value="1"/>
</dbReference>
<dbReference type="Pfam" id="PF21508">
    <property type="entry name" value="MenC_N"/>
    <property type="match status" value="1"/>
</dbReference>
<dbReference type="Pfam" id="PF13378">
    <property type="entry name" value="MR_MLE_C"/>
    <property type="match status" value="1"/>
</dbReference>
<dbReference type="SFLD" id="SFLDS00001">
    <property type="entry name" value="Enolase"/>
    <property type="match status" value="1"/>
</dbReference>
<dbReference type="SFLD" id="SFLDF00009">
    <property type="entry name" value="o-succinylbenzoate_synthase"/>
    <property type="match status" value="1"/>
</dbReference>
<dbReference type="SMART" id="SM00922">
    <property type="entry name" value="MR_MLE"/>
    <property type="match status" value="1"/>
</dbReference>
<dbReference type="SUPFAM" id="SSF51604">
    <property type="entry name" value="Enolase C-terminal domain-like"/>
    <property type="match status" value="1"/>
</dbReference>
<dbReference type="SUPFAM" id="SSF54826">
    <property type="entry name" value="Enolase N-terminal domain-like"/>
    <property type="match status" value="1"/>
</dbReference>
<feature type="chain" id="PRO_1000013798" description="o-succinylbenzoate synthase">
    <location>
        <begin position="1"/>
        <end position="320"/>
    </location>
</feature>
<feature type="active site" description="Proton donor" evidence="1">
    <location>
        <position position="133"/>
    </location>
</feature>
<feature type="active site" description="Proton acceptor" evidence="1">
    <location>
        <position position="235"/>
    </location>
</feature>
<feature type="binding site" evidence="1">
    <location>
        <position position="161"/>
    </location>
    <ligand>
        <name>Mg(2+)</name>
        <dbReference type="ChEBI" id="CHEBI:18420"/>
    </ligand>
</feature>
<feature type="binding site" evidence="1">
    <location>
        <position position="190"/>
    </location>
    <ligand>
        <name>Mg(2+)</name>
        <dbReference type="ChEBI" id="CHEBI:18420"/>
    </ligand>
</feature>
<feature type="binding site" evidence="1">
    <location>
        <position position="213"/>
    </location>
    <ligand>
        <name>Mg(2+)</name>
        <dbReference type="ChEBI" id="CHEBI:18420"/>
    </ligand>
</feature>
<gene>
    <name evidence="1" type="primary">menC</name>
    <name type="ordered locus">Ecok1_21590</name>
    <name type="ORF">APECO1_4300</name>
</gene>
<evidence type="ECO:0000255" key="1">
    <source>
        <dbReference type="HAMAP-Rule" id="MF_00470"/>
    </source>
</evidence>
<sequence length="320" mass="35451">MRSAQVYRWQIPMDAGVVLRDRRLKTRDGLYVCLREGEREGWGEISPLPGFSQETWEDAQSVLLAWVNNWLAGDCEIPQMPSVAFGVSCALAELAETLPQAANYRAAPLCNGDPDDLILKLADMPGEKVAKVKVGLYEAVRDGMVVNLLLEAIPDLHLRLDANRAWTPLKGQQFAKYVNPDYRHRIAFLEEPCKTRDDSRAFARETGIAIAWDESLREPDFAFVAEEGVRAVVIKPTLTGSLDKVREQVQAAHALGLTAVISSSIESSLGLTQLARIAAWLTPDTIPGLDTLDLMQAQQVRRWPGSPLPLVDVDALERLL</sequence>